<name>GLGB_BACSU</name>
<organism>
    <name type="scientific">Bacillus subtilis (strain 168)</name>
    <dbReference type="NCBI Taxonomy" id="224308"/>
    <lineage>
        <taxon>Bacteria</taxon>
        <taxon>Bacillati</taxon>
        <taxon>Bacillota</taxon>
        <taxon>Bacilli</taxon>
        <taxon>Bacillales</taxon>
        <taxon>Bacillaceae</taxon>
        <taxon>Bacillus</taxon>
    </lineage>
</organism>
<keyword id="KW-0119">Carbohydrate metabolism</keyword>
<keyword id="KW-0320">Glycogen biosynthesis</keyword>
<keyword id="KW-0321">Glycogen metabolism</keyword>
<keyword id="KW-0328">Glycosyltransferase</keyword>
<keyword id="KW-1185">Reference proteome</keyword>
<keyword id="KW-0808">Transferase</keyword>
<dbReference type="EC" id="2.4.1.18"/>
<dbReference type="EMBL" id="Z25795">
    <property type="protein sequence ID" value="CAA81040.1"/>
    <property type="molecule type" value="Genomic_DNA"/>
</dbReference>
<dbReference type="EMBL" id="AF008220">
    <property type="protein sequence ID" value="AAC00214.1"/>
    <property type="molecule type" value="Genomic_DNA"/>
</dbReference>
<dbReference type="EMBL" id="AL009126">
    <property type="protein sequence ID" value="CAB15076.1"/>
    <property type="molecule type" value="Genomic_DNA"/>
</dbReference>
<dbReference type="PIR" id="S40048">
    <property type="entry name" value="S40048"/>
</dbReference>
<dbReference type="RefSeq" id="NP_390976.1">
    <property type="nucleotide sequence ID" value="NC_000964.3"/>
</dbReference>
<dbReference type="RefSeq" id="WP_004398803.1">
    <property type="nucleotide sequence ID" value="NZ_OZ025638.1"/>
</dbReference>
<dbReference type="SMR" id="P39118"/>
<dbReference type="FunCoup" id="P39118">
    <property type="interactions" value="538"/>
</dbReference>
<dbReference type="STRING" id="224308.BSU30980"/>
<dbReference type="CAZy" id="CBM48">
    <property type="family name" value="Carbohydrate-Binding Module Family 48"/>
</dbReference>
<dbReference type="CAZy" id="GH13">
    <property type="family name" value="Glycoside Hydrolase Family 13"/>
</dbReference>
<dbReference type="PaxDb" id="224308-BSU30980"/>
<dbReference type="EnsemblBacteria" id="CAB15076">
    <property type="protein sequence ID" value="CAB15076"/>
    <property type="gene ID" value="BSU_30980"/>
</dbReference>
<dbReference type="GeneID" id="937993"/>
<dbReference type="KEGG" id="bsu:BSU30980"/>
<dbReference type="PATRIC" id="fig|224308.179.peg.3357"/>
<dbReference type="eggNOG" id="COG0296">
    <property type="taxonomic scope" value="Bacteria"/>
</dbReference>
<dbReference type="InParanoid" id="P39118"/>
<dbReference type="OrthoDB" id="9800174at2"/>
<dbReference type="PhylomeDB" id="P39118"/>
<dbReference type="BioCyc" id="BSUB:BSU30980-MONOMER"/>
<dbReference type="BRENDA" id="2.4.1.18">
    <property type="organism ID" value="658"/>
</dbReference>
<dbReference type="UniPathway" id="UPA00164"/>
<dbReference type="Proteomes" id="UP000001570">
    <property type="component" value="Chromosome"/>
</dbReference>
<dbReference type="GO" id="GO:0005737">
    <property type="term" value="C:cytoplasm"/>
    <property type="evidence" value="ECO:0000318"/>
    <property type="project" value="GO_Central"/>
</dbReference>
<dbReference type="GO" id="GO:0005829">
    <property type="term" value="C:cytosol"/>
    <property type="evidence" value="ECO:0000318"/>
    <property type="project" value="GO_Central"/>
</dbReference>
<dbReference type="GO" id="GO:0003844">
    <property type="term" value="F:1,4-alpha-glucan branching enzyme activity"/>
    <property type="evidence" value="ECO:0000318"/>
    <property type="project" value="GO_Central"/>
</dbReference>
<dbReference type="GO" id="GO:0043169">
    <property type="term" value="F:cation binding"/>
    <property type="evidence" value="ECO:0007669"/>
    <property type="project" value="InterPro"/>
</dbReference>
<dbReference type="GO" id="GO:0004553">
    <property type="term" value="F:hydrolase activity, hydrolyzing O-glycosyl compounds"/>
    <property type="evidence" value="ECO:0007669"/>
    <property type="project" value="InterPro"/>
</dbReference>
<dbReference type="GO" id="GO:0005978">
    <property type="term" value="P:glycogen biosynthetic process"/>
    <property type="evidence" value="ECO:0000318"/>
    <property type="project" value="GO_Central"/>
</dbReference>
<dbReference type="CDD" id="cd11322">
    <property type="entry name" value="AmyAc_Glg_BE"/>
    <property type="match status" value="1"/>
</dbReference>
<dbReference type="CDD" id="cd02855">
    <property type="entry name" value="E_set_GBE_prok_N"/>
    <property type="match status" value="1"/>
</dbReference>
<dbReference type="FunFam" id="2.60.40.10:FF:000169">
    <property type="entry name" value="1,4-alpha-glucan branching enzyme GlgB"/>
    <property type="match status" value="1"/>
</dbReference>
<dbReference type="FunFam" id="2.60.40.1180:FF:000002">
    <property type="entry name" value="1,4-alpha-glucan branching enzyme GlgB"/>
    <property type="match status" value="1"/>
</dbReference>
<dbReference type="FunFam" id="3.20.20.80:FF:000003">
    <property type="entry name" value="1,4-alpha-glucan branching enzyme GlgB"/>
    <property type="match status" value="1"/>
</dbReference>
<dbReference type="Gene3D" id="3.20.20.80">
    <property type="entry name" value="Glycosidases"/>
    <property type="match status" value="1"/>
</dbReference>
<dbReference type="Gene3D" id="2.60.40.1180">
    <property type="entry name" value="Golgi alpha-mannosidase II"/>
    <property type="match status" value="1"/>
</dbReference>
<dbReference type="Gene3D" id="2.60.40.10">
    <property type="entry name" value="Immunoglobulins"/>
    <property type="match status" value="1"/>
</dbReference>
<dbReference type="HAMAP" id="MF_00685">
    <property type="entry name" value="GlgB"/>
    <property type="match status" value="1"/>
</dbReference>
<dbReference type="InterPro" id="IPR006048">
    <property type="entry name" value="A-amylase/branching_C"/>
</dbReference>
<dbReference type="InterPro" id="IPR037439">
    <property type="entry name" value="Branching_enzy"/>
</dbReference>
<dbReference type="InterPro" id="IPR006407">
    <property type="entry name" value="GlgB"/>
</dbReference>
<dbReference type="InterPro" id="IPR044143">
    <property type="entry name" value="GlgB_N_E_set_prok"/>
</dbReference>
<dbReference type="InterPro" id="IPR006047">
    <property type="entry name" value="Glyco_hydro_13_cat_dom"/>
</dbReference>
<dbReference type="InterPro" id="IPR004193">
    <property type="entry name" value="Glyco_hydro_13_N"/>
</dbReference>
<dbReference type="InterPro" id="IPR013780">
    <property type="entry name" value="Glyco_hydro_b"/>
</dbReference>
<dbReference type="InterPro" id="IPR017853">
    <property type="entry name" value="Glycoside_hydrolase_SF"/>
</dbReference>
<dbReference type="InterPro" id="IPR013783">
    <property type="entry name" value="Ig-like_fold"/>
</dbReference>
<dbReference type="InterPro" id="IPR014756">
    <property type="entry name" value="Ig_E-set"/>
</dbReference>
<dbReference type="NCBIfam" id="TIGR01515">
    <property type="entry name" value="branching_enzym"/>
    <property type="match status" value="1"/>
</dbReference>
<dbReference type="NCBIfam" id="NF003811">
    <property type="entry name" value="PRK05402.1"/>
    <property type="match status" value="1"/>
</dbReference>
<dbReference type="NCBIfam" id="NF008967">
    <property type="entry name" value="PRK12313.1"/>
    <property type="match status" value="1"/>
</dbReference>
<dbReference type="PANTHER" id="PTHR43651">
    <property type="entry name" value="1,4-ALPHA-GLUCAN-BRANCHING ENZYME"/>
    <property type="match status" value="1"/>
</dbReference>
<dbReference type="PANTHER" id="PTHR43651:SF3">
    <property type="entry name" value="1,4-ALPHA-GLUCAN-BRANCHING ENZYME"/>
    <property type="match status" value="1"/>
</dbReference>
<dbReference type="Pfam" id="PF00128">
    <property type="entry name" value="Alpha-amylase"/>
    <property type="match status" value="2"/>
</dbReference>
<dbReference type="Pfam" id="PF02806">
    <property type="entry name" value="Alpha-amylase_C"/>
    <property type="match status" value="1"/>
</dbReference>
<dbReference type="Pfam" id="PF02922">
    <property type="entry name" value="CBM_48"/>
    <property type="match status" value="1"/>
</dbReference>
<dbReference type="PIRSF" id="PIRSF000463">
    <property type="entry name" value="GlgB"/>
    <property type="match status" value="1"/>
</dbReference>
<dbReference type="SMART" id="SM00642">
    <property type="entry name" value="Aamy"/>
    <property type="match status" value="1"/>
</dbReference>
<dbReference type="SUPFAM" id="SSF51445">
    <property type="entry name" value="(Trans)glycosidases"/>
    <property type="match status" value="1"/>
</dbReference>
<dbReference type="SUPFAM" id="SSF81296">
    <property type="entry name" value="E set domains"/>
    <property type="match status" value="1"/>
</dbReference>
<dbReference type="SUPFAM" id="SSF51011">
    <property type="entry name" value="Glycosyl hydrolase domain"/>
    <property type="match status" value="1"/>
</dbReference>
<evidence type="ECO:0000250" key="1"/>
<evidence type="ECO:0000305" key="2"/>
<proteinExistence type="evidence at transcript level"/>
<protein>
    <recommendedName>
        <fullName>1,4-alpha-glucan branching enzyme GlgB</fullName>
        <ecNumber>2.4.1.18</ecNumber>
    </recommendedName>
    <alternativeName>
        <fullName>1,4-alpha-D-glucan:1,4-alpha-D-glucan 6-glucosyl-transferase</fullName>
    </alternativeName>
    <alternativeName>
        <fullName>Alpha-(1-&gt;4)-glucan branching enzyme</fullName>
    </alternativeName>
    <alternativeName>
        <fullName>Glycogen branching enzyme</fullName>
        <shortName>BE</shortName>
    </alternativeName>
</protein>
<gene>
    <name type="primary">glgB</name>
    <name type="ordered locus">BSU30980</name>
</gene>
<feature type="chain" id="PRO_0000188683" description="1,4-alpha-glucan branching enzyme GlgB">
    <location>
        <begin position="1"/>
        <end position="627"/>
    </location>
</feature>
<feature type="active site" description="Nucleophile" evidence="1">
    <location>
        <position position="309"/>
    </location>
</feature>
<feature type="active site" description="Proton donor" evidence="1">
    <location>
        <position position="352"/>
    </location>
</feature>
<comment type="function">
    <text>Catalyzes the formation of the alpha-1,6-glucosidic linkages in glycogen by scission of a 1,4-alpha-linked oligosaccharide from growing alpha-1,4-glucan chains and the subsequent attachment of the oligosaccharide to the alpha-1,6 position.</text>
</comment>
<comment type="catalytic activity">
    <reaction>
        <text>Transfers a segment of a (1-&gt;4)-alpha-D-glucan chain to a primary hydroxy group in a similar glucan chain.</text>
        <dbReference type="EC" id="2.4.1.18"/>
    </reaction>
</comment>
<comment type="pathway">
    <text>Glycan biosynthesis; glycogen biosynthesis.</text>
</comment>
<comment type="subunit">
    <text evidence="1">Monomer.</text>
</comment>
<comment type="induction">
    <text>Expressed exclusively on media containing carbon sources that allow efficient sporulation.</text>
</comment>
<comment type="similarity">
    <text evidence="2">Belongs to the glycosyl hydrolase 13 family. GlgB subfamily.</text>
</comment>
<reference key="1">
    <citation type="journal article" date="1994" name="Mol. Microbiol.">
        <title>Glycogen in Bacillus subtilis: molecular characterization of an operon encoding enzymes involved in glycogen biosynthesis and degradation.</title>
        <authorList>
            <person name="Kiel J.A.K.W."/>
            <person name="Boels J.M."/>
            <person name="Beldman G."/>
            <person name="Venema G."/>
        </authorList>
    </citation>
    <scope>NUCLEOTIDE SEQUENCE [GENOMIC DNA]</scope>
    <source>
        <strain>168</strain>
    </source>
</reference>
<reference key="2">
    <citation type="journal article" date="1997" name="Microbiology">
        <title>Sequencing and functional annotation of the Bacillus subtilis genes in the 200 kb rrnB-dnaB region.</title>
        <authorList>
            <person name="Lapidus A."/>
            <person name="Galleron N."/>
            <person name="Sorokin A."/>
            <person name="Ehrlich S.D."/>
        </authorList>
    </citation>
    <scope>NUCLEOTIDE SEQUENCE [GENOMIC DNA]</scope>
    <source>
        <strain>168</strain>
    </source>
</reference>
<reference key="3">
    <citation type="journal article" date="1997" name="Nature">
        <title>The complete genome sequence of the Gram-positive bacterium Bacillus subtilis.</title>
        <authorList>
            <person name="Kunst F."/>
            <person name="Ogasawara N."/>
            <person name="Moszer I."/>
            <person name="Albertini A.M."/>
            <person name="Alloni G."/>
            <person name="Azevedo V."/>
            <person name="Bertero M.G."/>
            <person name="Bessieres P."/>
            <person name="Bolotin A."/>
            <person name="Borchert S."/>
            <person name="Borriss R."/>
            <person name="Boursier L."/>
            <person name="Brans A."/>
            <person name="Braun M."/>
            <person name="Brignell S.C."/>
            <person name="Bron S."/>
            <person name="Brouillet S."/>
            <person name="Bruschi C.V."/>
            <person name="Caldwell B."/>
            <person name="Capuano V."/>
            <person name="Carter N.M."/>
            <person name="Choi S.-K."/>
            <person name="Codani J.-J."/>
            <person name="Connerton I.F."/>
            <person name="Cummings N.J."/>
            <person name="Daniel R.A."/>
            <person name="Denizot F."/>
            <person name="Devine K.M."/>
            <person name="Duesterhoeft A."/>
            <person name="Ehrlich S.D."/>
            <person name="Emmerson P.T."/>
            <person name="Entian K.-D."/>
            <person name="Errington J."/>
            <person name="Fabret C."/>
            <person name="Ferrari E."/>
            <person name="Foulger D."/>
            <person name="Fritz C."/>
            <person name="Fujita M."/>
            <person name="Fujita Y."/>
            <person name="Fuma S."/>
            <person name="Galizzi A."/>
            <person name="Galleron N."/>
            <person name="Ghim S.-Y."/>
            <person name="Glaser P."/>
            <person name="Goffeau A."/>
            <person name="Golightly E.J."/>
            <person name="Grandi G."/>
            <person name="Guiseppi G."/>
            <person name="Guy B.J."/>
            <person name="Haga K."/>
            <person name="Haiech J."/>
            <person name="Harwood C.R."/>
            <person name="Henaut A."/>
            <person name="Hilbert H."/>
            <person name="Holsappel S."/>
            <person name="Hosono S."/>
            <person name="Hullo M.-F."/>
            <person name="Itaya M."/>
            <person name="Jones L.-M."/>
            <person name="Joris B."/>
            <person name="Karamata D."/>
            <person name="Kasahara Y."/>
            <person name="Klaerr-Blanchard M."/>
            <person name="Klein C."/>
            <person name="Kobayashi Y."/>
            <person name="Koetter P."/>
            <person name="Koningstein G."/>
            <person name="Krogh S."/>
            <person name="Kumano M."/>
            <person name="Kurita K."/>
            <person name="Lapidus A."/>
            <person name="Lardinois S."/>
            <person name="Lauber J."/>
            <person name="Lazarevic V."/>
            <person name="Lee S.-M."/>
            <person name="Levine A."/>
            <person name="Liu H."/>
            <person name="Masuda S."/>
            <person name="Mauel C."/>
            <person name="Medigue C."/>
            <person name="Medina N."/>
            <person name="Mellado R.P."/>
            <person name="Mizuno M."/>
            <person name="Moestl D."/>
            <person name="Nakai S."/>
            <person name="Noback M."/>
            <person name="Noone D."/>
            <person name="O'Reilly M."/>
            <person name="Ogawa K."/>
            <person name="Ogiwara A."/>
            <person name="Oudega B."/>
            <person name="Park S.-H."/>
            <person name="Parro V."/>
            <person name="Pohl T.M."/>
            <person name="Portetelle D."/>
            <person name="Porwollik S."/>
            <person name="Prescott A.M."/>
            <person name="Presecan E."/>
            <person name="Pujic P."/>
            <person name="Purnelle B."/>
            <person name="Rapoport G."/>
            <person name="Rey M."/>
            <person name="Reynolds S."/>
            <person name="Rieger M."/>
            <person name="Rivolta C."/>
            <person name="Rocha E."/>
            <person name="Roche B."/>
            <person name="Rose M."/>
            <person name="Sadaie Y."/>
            <person name="Sato T."/>
            <person name="Scanlan E."/>
            <person name="Schleich S."/>
            <person name="Schroeter R."/>
            <person name="Scoffone F."/>
            <person name="Sekiguchi J."/>
            <person name="Sekowska A."/>
            <person name="Seror S.J."/>
            <person name="Serror P."/>
            <person name="Shin B.-S."/>
            <person name="Soldo B."/>
            <person name="Sorokin A."/>
            <person name="Tacconi E."/>
            <person name="Takagi T."/>
            <person name="Takahashi H."/>
            <person name="Takemaru K."/>
            <person name="Takeuchi M."/>
            <person name="Tamakoshi A."/>
            <person name="Tanaka T."/>
            <person name="Terpstra P."/>
            <person name="Tognoni A."/>
            <person name="Tosato V."/>
            <person name="Uchiyama S."/>
            <person name="Vandenbol M."/>
            <person name="Vannier F."/>
            <person name="Vassarotti A."/>
            <person name="Viari A."/>
            <person name="Wambutt R."/>
            <person name="Wedler E."/>
            <person name="Wedler H."/>
            <person name="Weitzenegger T."/>
            <person name="Winters P."/>
            <person name="Wipat A."/>
            <person name="Yamamoto H."/>
            <person name="Yamane K."/>
            <person name="Yasumoto K."/>
            <person name="Yata K."/>
            <person name="Yoshida K."/>
            <person name="Yoshikawa H.-F."/>
            <person name="Zumstein E."/>
            <person name="Yoshikawa H."/>
            <person name="Danchin A."/>
        </authorList>
    </citation>
    <scope>NUCLEOTIDE SEQUENCE [LARGE SCALE GENOMIC DNA]</scope>
    <source>
        <strain>168</strain>
    </source>
</reference>
<sequence length="627" mass="73665">MAAASPTAHDVYLFHEGSLFKSYQLFGSHYRELNGKSGYEFCVWAPHASEVRVAGDFNSWSGEEHVMHRVNDNGIWTLFIPGIGEKERYKYEIVTNNGEIRLKADPYAIYSEVRPNTASLTYDLEGYSWQDQKWQKKQKAKTLYEKPVFIYELHLGSWKKHSDGRHYSYKELSQTLIPYIKKHGFTHIELLPVYEHPYDRSWGYQGTGYYSPTSRFGPPHDLMKFVDECHQQNIGVILDWVPGHFCKDAHGLYMFDGEPLYEYKEERDRENWLWGTANFDLGKPEVHSFLISNALYWAEFYHIDGFRVDAVANILYWPNQDERHTNPYAVDFLKKLNQTMREAYPHVMMIAEDSTEWPQVTGAVEEGGLGFHYKWNMGWMNDVLKYMETPPEERRHCHQLISFSLLYAFSEHFVLPFSHDEVVYGKKSLLNKMPGDYWQKFAQYRLLLGYMTVHPGKKLIFMGSEFAQFDEWKDTEQLDWFLDSFPMHQKASVFTQDLLRFYQKSKILYEHDHRAQSFEWIDVHNDEQSIFSFIRYGQKHGEALVIICNFTPVVYHQYDVGVPFFTQYIEVLNSDSETYGGSGQINKKPLSAKKGALHHKPCYITMTIPPYGISILRAVKKRGEIKR</sequence>
<accession>P39118</accession>